<dbReference type="EMBL" id="AB168147">
    <property type="protein sequence ID" value="BAE00272.1"/>
    <property type="molecule type" value="mRNA"/>
</dbReference>
<dbReference type="RefSeq" id="NP_001271522.1">
    <property type="nucleotide sequence ID" value="NM_001284593.1"/>
</dbReference>
<dbReference type="eggNOG" id="ENOG502QVPD">
    <property type="taxonomic scope" value="Eukaryota"/>
</dbReference>
<dbReference type="Proteomes" id="UP000233100">
    <property type="component" value="Unplaced"/>
</dbReference>
<dbReference type="InterPro" id="IPR027878">
    <property type="entry name" value="DUF4551"/>
</dbReference>
<dbReference type="PANTHER" id="PTHR35354">
    <property type="entry name" value="RGD1561648"/>
    <property type="match status" value="1"/>
</dbReference>
<dbReference type="PANTHER" id="PTHR35354:SF1">
    <property type="entry name" value="RGD1561648"/>
    <property type="match status" value="1"/>
</dbReference>
<dbReference type="Pfam" id="PF15087">
    <property type="entry name" value="DUF4551"/>
    <property type="match status" value="1"/>
</dbReference>
<protein>
    <recommendedName>
        <fullName>Uncharacterized protein C12orf56 homolog</fullName>
    </recommendedName>
</protein>
<feature type="chain" id="PRO_0000320927" description="Uncharacterized protein C12orf56 homolog">
    <location>
        <begin position="1"/>
        <end position="623"/>
    </location>
</feature>
<feature type="region of interest" description="Disordered" evidence="1">
    <location>
        <begin position="157"/>
        <end position="237"/>
    </location>
</feature>
<feature type="compositionally biased region" description="Basic and acidic residues" evidence="1">
    <location>
        <begin position="157"/>
        <end position="166"/>
    </location>
</feature>
<feature type="compositionally biased region" description="Polar residues" evidence="1">
    <location>
        <begin position="167"/>
        <end position="177"/>
    </location>
</feature>
<feature type="compositionally biased region" description="Low complexity" evidence="1">
    <location>
        <begin position="193"/>
        <end position="210"/>
    </location>
</feature>
<proteinExistence type="evidence at transcript level"/>
<evidence type="ECO:0000256" key="1">
    <source>
        <dbReference type="SAM" id="MobiDB-lite"/>
    </source>
</evidence>
<reference key="1">
    <citation type="submission" date="2005-06" db="EMBL/GenBank/DDBJ databases">
        <title>DNA sequences of macaque genes expressed in brain or testis and its evolutionary implications.</title>
        <authorList>
            <consortium name="International consortium for macaque cDNA sequencing and analysis"/>
        </authorList>
    </citation>
    <scope>NUCLEOTIDE SEQUENCE [LARGE SCALE MRNA]</scope>
    <source>
        <tissue>Testis</tissue>
    </source>
</reference>
<accession>Q4R9E9</accession>
<name>CL056_MACFA</name>
<keyword id="KW-1185">Reference proteome</keyword>
<sequence>MACPLQSGFPARTNSRLDVFLRRHLPPEAYDAVRAYEPCIVVSNSENHTLKYVVLSDRLIYLTENPPKSIRRVVALRDVVAIDLIDDYPEFLSSPDGEISQHIRIIYSSTVLKKECKKSKGVRKFLFPFHHTKANNEKVKEEKNGLAFWRIKEPRSLNESPLRDQQESSTPSKNSTLCPRPGVQKLSLHGQGAFRPLPSPSRRSSQSAPATGKAVSEPSCTTNTKEPQGLPDHNNSISEIPFKCSGNGNEFYLGNSLLDSPSQSNSNLEKKESELHLYVISTTSSIFLHLKSSWNNYNIKATLLQDPFYASKFSPAIGSQKPYRSEEKIKHFSQLKSELFLKDNSLRRILPLIMELKVAAQKNFILKRLFWKTSDLFYFLVNKLHEYLPESRDKNALQNQSQRVDELVACIEIIQTLVLMFRETETESSRLNTLAAKKGTLFNLLVILISEPQIPKSCPVFDIQLVADSALVRMSFDAKLQKLILEYTNTATALLYEILLVFQQGNLGLGSRKFAISWMMSFLQSCPPIITFVASIVKQVVRGLSASFQLLTPCQAVLLYQQFYILKSCLQHSRTLAEYIKNNYREEFRYFIHMPALQKRLPLCYPITQHTTQLFHEVLKLVE</sequence>
<organism>
    <name type="scientific">Macaca fascicularis</name>
    <name type="common">Crab-eating macaque</name>
    <name type="synonym">Cynomolgus monkey</name>
    <dbReference type="NCBI Taxonomy" id="9541"/>
    <lineage>
        <taxon>Eukaryota</taxon>
        <taxon>Metazoa</taxon>
        <taxon>Chordata</taxon>
        <taxon>Craniata</taxon>
        <taxon>Vertebrata</taxon>
        <taxon>Euteleostomi</taxon>
        <taxon>Mammalia</taxon>
        <taxon>Eutheria</taxon>
        <taxon>Euarchontoglires</taxon>
        <taxon>Primates</taxon>
        <taxon>Haplorrhini</taxon>
        <taxon>Catarrhini</taxon>
        <taxon>Cercopithecidae</taxon>
        <taxon>Cercopithecinae</taxon>
        <taxon>Macaca</taxon>
    </lineage>
</organism>
<gene>
    <name type="ORF">QtsA-10134</name>
</gene>